<sequence length="263" mass="29602">MASPAALRPSMGAIMQTCRSAATAPKVAVAVPVRALSTSAALLKRHKYPTARVTRDNSKQRGESALRKSGTRWKLSVSDEPLPEPVPREELPPIQVDENHGLWDFFYDRETVAMAPLEHTKHGRAWTVSELRKKSWDDLHRLWWVCVKERNRIATANWERTKSELGFGLAEANERDRNVKQTMRGIKHVLTERFYAWEDAVKLAEQDPEIDLSNPENPYTPSTFLEAEETAEGAEASETQSTTTEIDPTTIPSSKSQAEAPRV</sequence>
<accession>Q7S910</accession>
<evidence type="ECO:0000256" key="1">
    <source>
        <dbReference type="SAM" id="MobiDB-lite"/>
    </source>
</evidence>
<evidence type="ECO:0000269" key="2">
    <source>
    </source>
</evidence>
<evidence type="ECO:0000269" key="3">
    <source>
    </source>
</evidence>
<evidence type="ECO:0000303" key="4">
    <source>
    </source>
</evidence>
<evidence type="ECO:0000305" key="5"/>
<evidence type="ECO:0000305" key="6">
    <source>
    </source>
</evidence>
<evidence type="ECO:0007744" key="7">
    <source>
        <dbReference type="PDB" id="6YWS"/>
    </source>
</evidence>
<evidence type="ECO:0007744" key="8">
    <source>
        <dbReference type="PDB" id="6YWV"/>
    </source>
</evidence>
<evidence type="ECO:0007744" key="9">
    <source>
        <dbReference type="PDB" id="6YWX"/>
    </source>
</evidence>
<gene>
    <name type="primary">mrpl4</name>
    <name type="ORF">NCU05287</name>
</gene>
<reference key="1">
    <citation type="journal article" date="2003" name="Nature">
        <title>The genome sequence of the filamentous fungus Neurospora crassa.</title>
        <authorList>
            <person name="Galagan J.E."/>
            <person name="Calvo S.E."/>
            <person name="Borkovich K.A."/>
            <person name="Selker E.U."/>
            <person name="Read N.D."/>
            <person name="Jaffe D.B."/>
            <person name="FitzHugh W."/>
            <person name="Ma L.-J."/>
            <person name="Smirnov S."/>
            <person name="Purcell S."/>
            <person name="Rehman B."/>
            <person name="Elkins T."/>
            <person name="Engels R."/>
            <person name="Wang S."/>
            <person name="Nielsen C.B."/>
            <person name="Butler J."/>
            <person name="Endrizzi M."/>
            <person name="Qui D."/>
            <person name="Ianakiev P."/>
            <person name="Bell-Pedersen D."/>
            <person name="Nelson M.A."/>
            <person name="Werner-Washburne M."/>
            <person name="Selitrennikoff C.P."/>
            <person name="Kinsey J.A."/>
            <person name="Braun E.L."/>
            <person name="Zelter A."/>
            <person name="Schulte U."/>
            <person name="Kothe G.O."/>
            <person name="Jedd G."/>
            <person name="Mewes H.-W."/>
            <person name="Staben C."/>
            <person name="Marcotte E."/>
            <person name="Greenberg D."/>
            <person name="Roy A."/>
            <person name="Foley K."/>
            <person name="Naylor J."/>
            <person name="Stange-Thomann N."/>
            <person name="Barrett R."/>
            <person name="Gnerre S."/>
            <person name="Kamal M."/>
            <person name="Kamvysselis M."/>
            <person name="Mauceli E.W."/>
            <person name="Bielke C."/>
            <person name="Rudd S."/>
            <person name="Frishman D."/>
            <person name="Krystofova S."/>
            <person name="Rasmussen C."/>
            <person name="Metzenberg R.L."/>
            <person name="Perkins D.D."/>
            <person name="Kroken S."/>
            <person name="Cogoni C."/>
            <person name="Macino G."/>
            <person name="Catcheside D.E.A."/>
            <person name="Li W."/>
            <person name="Pratt R.J."/>
            <person name="Osmani S.A."/>
            <person name="DeSouza C.P.C."/>
            <person name="Glass N.L."/>
            <person name="Orbach M.J."/>
            <person name="Berglund J.A."/>
            <person name="Voelker R."/>
            <person name="Yarden O."/>
            <person name="Plamann M."/>
            <person name="Seiler S."/>
            <person name="Dunlap J.C."/>
            <person name="Radford A."/>
            <person name="Aramayo R."/>
            <person name="Natvig D.O."/>
            <person name="Alex L.A."/>
            <person name="Mannhaupt G."/>
            <person name="Ebbole D.J."/>
            <person name="Freitag M."/>
            <person name="Paulsen I."/>
            <person name="Sachs M.S."/>
            <person name="Lander E.S."/>
            <person name="Nusbaum C."/>
            <person name="Birren B.W."/>
        </authorList>
    </citation>
    <scope>NUCLEOTIDE SEQUENCE [LARGE SCALE GENOMIC DNA]</scope>
    <source>
        <strain>ATCC 24698 / 74-OR23-1A / CBS 708.71 / DSM 1257 / FGSC 987</strain>
    </source>
</reference>
<reference key="2">
    <citation type="journal article" date="2006" name="FEMS Microbiol. Lett.">
        <title>Identification and comparative analysis of the large subunit mitochondrial ribosomal proteins of Neurospora crassa.</title>
        <authorList>
            <person name="Gan X."/>
            <person name="Arita K."/>
            <person name="Isono S."/>
            <person name="Kitakawa M."/>
            <person name="Yoshino K."/>
            <person name="Yonezawa K."/>
            <person name="Kato A."/>
            <person name="Inoue H."/>
            <person name="Isono K."/>
        </authorList>
    </citation>
    <scope>IDENTIFICATION IN THE MITOCHONDRIAL RIBOSOMAL LARGE COMPLEX</scope>
    <scope>IDENTIFICATION BY MASS SPECTROMETRY</scope>
</reference>
<reference evidence="7 8 9" key="3">
    <citation type="journal article" date="2020" name="Nat. Commun.">
        <title>Analysis of translating mitoribosome reveals functional characteristics of translation in mitochondria of fungi.</title>
        <authorList>
            <person name="Itoh Y."/>
            <person name="Naschberger A."/>
            <person name="Mortezaei N."/>
            <person name="Herrmann J.M."/>
            <person name="Amunts A."/>
        </authorList>
    </citation>
    <scope>STRUCTURE BY ELECTRON MICROSCOPY (2.74 ANGSTROMS)</scope>
</reference>
<proteinExistence type="evidence at protein level"/>
<dbReference type="EMBL" id="CM002239">
    <property type="protein sequence ID" value="EAA32822.2"/>
    <property type="molecule type" value="Genomic_DNA"/>
</dbReference>
<dbReference type="RefSeq" id="XP_962058.2">
    <property type="nucleotide sequence ID" value="XM_956965.3"/>
</dbReference>
<dbReference type="PDB" id="6YWS">
    <property type="method" value="EM"/>
    <property type="resolution" value="2.74 A"/>
    <property type="chains" value="T=1-263"/>
</dbReference>
<dbReference type="PDB" id="6YWV">
    <property type="method" value="EM"/>
    <property type="resolution" value="3.03 A"/>
    <property type="chains" value="T=1-263"/>
</dbReference>
<dbReference type="PDB" id="6YWX">
    <property type="method" value="EM"/>
    <property type="resolution" value="3.10 A"/>
    <property type="chains" value="T=1-263"/>
</dbReference>
<dbReference type="PDBsum" id="6YWS"/>
<dbReference type="PDBsum" id="6YWV"/>
<dbReference type="PDBsum" id="6YWX"/>
<dbReference type="EMDB" id="EMD-10973"/>
<dbReference type="EMDB" id="EMD-10977"/>
<dbReference type="EMDB" id="EMD-10978"/>
<dbReference type="SMR" id="Q7S910"/>
<dbReference type="STRING" id="367110.Q7S910"/>
<dbReference type="PaxDb" id="5141-EFNCRP00000004994"/>
<dbReference type="EnsemblFungi" id="EAA32822">
    <property type="protein sequence ID" value="EAA32822"/>
    <property type="gene ID" value="NCU05287"/>
</dbReference>
<dbReference type="GeneID" id="3878206"/>
<dbReference type="KEGG" id="ncr:NCU05287"/>
<dbReference type="VEuPathDB" id="FungiDB:NCU05287"/>
<dbReference type="HOGENOM" id="CLU_063281_1_1_1"/>
<dbReference type="InParanoid" id="Q7S910"/>
<dbReference type="OMA" id="YAHGRAW"/>
<dbReference type="OrthoDB" id="270763at2759"/>
<dbReference type="Proteomes" id="UP000001805">
    <property type="component" value="Chromosome 4, Linkage Group IV"/>
</dbReference>
<dbReference type="GO" id="GO:0005762">
    <property type="term" value="C:mitochondrial large ribosomal subunit"/>
    <property type="evidence" value="ECO:0000318"/>
    <property type="project" value="GO_Central"/>
</dbReference>
<dbReference type="GO" id="GO:0003735">
    <property type="term" value="F:structural constituent of ribosome"/>
    <property type="evidence" value="ECO:0000318"/>
    <property type="project" value="GO_Central"/>
</dbReference>
<dbReference type="GO" id="GO:0032543">
    <property type="term" value="P:mitochondrial translation"/>
    <property type="evidence" value="ECO:0000318"/>
    <property type="project" value="GO_Central"/>
</dbReference>
<dbReference type="Gene3D" id="6.10.330.20">
    <property type="match status" value="1"/>
</dbReference>
<dbReference type="InterPro" id="IPR038340">
    <property type="entry name" value="MRP-L47_sf"/>
</dbReference>
<dbReference type="InterPro" id="IPR010729">
    <property type="entry name" value="Ribosomal_uL29_mit"/>
</dbReference>
<dbReference type="PANTHER" id="PTHR21183:SF18">
    <property type="entry name" value="LARGE RIBOSOMAL SUBUNIT PROTEIN UL29M"/>
    <property type="match status" value="1"/>
</dbReference>
<dbReference type="PANTHER" id="PTHR21183">
    <property type="entry name" value="RIBOSOMAL PROTEIN L47, MITOCHONDRIAL-RELATED"/>
    <property type="match status" value="1"/>
</dbReference>
<dbReference type="Pfam" id="PF06984">
    <property type="entry name" value="MRP-L47"/>
    <property type="match status" value="1"/>
</dbReference>
<keyword id="KW-0002">3D-structure</keyword>
<keyword id="KW-0496">Mitochondrion</keyword>
<keyword id="KW-1185">Reference proteome</keyword>
<keyword id="KW-0687">Ribonucleoprotein</keyword>
<keyword id="KW-0689">Ribosomal protein</keyword>
<organism>
    <name type="scientific">Neurospora crassa (strain ATCC 24698 / 74-OR23-1A / CBS 708.71 / DSM 1257 / FGSC 987)</name>
    <dbReference type="NCBI Taxonomy" id="367110"/>
    <lineage>
        <taxon>Eukaryota</taxon>
        <taxon>Fungi</taxon>
        <taxon>Dikarya</taxon>
        <taxon>Ascomycota</taxon>
        <taxon>Pezizomycotina</taxon>
        <taxon>Sordariomycetes</taxon>
        <taxon>Sordariomycetidae</taxon>
        <taxon>Sordariales</taxon>
        <taxon>Sordariaceae</taxon>
        <taxon>Neurospora</taxon>
    </lineage>
</organism>
<name>RM04_NEUCR</name>
<feature type="chain" id="PRO_0000372407" description="Large ribosomal subunit protein uL29m">
    <location>
        <begin position="1"/>
        <end position="263"/>
    </location>
</feature>
<feature type="region of interest" description="Disordered" evidence="1">
    <location>
        <begin position="51"/>
        <end position="92"/>
    </location>
</feature>
<feature type="region of interest" description="Disordered" evidence="1">
    <location>
        <begin position="208"/>
        <end position="263"/>
    </location>
</feature>
<feature type="compositionally biased region" description="Basic and acidic residues" evidence="1">
    <location>
        <begin position="53"/>
        <end position="66"/>
    </location>
</feature>
<feature type="compositionally biased region" description="Polar residues" evidence="1">
    <location>
        <begin position="214"/>
        <end position="223"/>
    </location>
</feature>
<feature type="compositionally biased region" description="Low complexity" evidence="1">
    <location>
        <begin position="233"/>
        <end position="245"/>
    </location>
</feature>
<feature type="compositionally biased region" description="Polar residues" evidence="1">
    <location>
        <begin position="246"/>
        <end position="257"/>
    </location>
</feature>
<comment type="function">
    <text evidence="6">Component of the mitochondrial ribosome (mitoribosome), a dedicated translation machinery responsible for the synthesis of mitochondrial genome-encoded proteins, including at least some of the essential transmembrane subunits of the mitochondrial respiratory chain. The mitoribosomes are attached to the mitochondrial inner membrane and translation products are cotranslationally integrated into the membrane.</text>
</comment>
<comment type="subunit">
    <text evidence="2 3">Component of the mitochondrial large ribosomal subunit (mt-LSU). Mature N.crassa 74S mitochondrial ribosomes consist of a small (37S) and a large (54S) subunit. The 37S small subunit contains a 16S ribosomal RNA (16S mt-rRNA) and 32 different proteins. The 54S large subunit contains a 23S rRNA (23S mt-rRNA) and 42 different proteins.</text>
</comment>
<comment type="subcellular location">
    <subcellularLocation>
        <location evidence="2 3">Mitochondrion</location>
    </subcellularLocation>
</comment>
<comment type="similarity">
    <text evidence="5">Belongs to the universal ribosomal protein uL29 family.</text>
</comment>
<protein>
    <recommendedName>
        <fullName evidence="4">Large ribosomal subunit protein uL29m</fullName>
    </recommendedName>
    <alternativeName>
        <fullName>54S ribosomal protein L4, mitochondrial</fullName>
    </alternativeName>
</protein>